<reference key="1">
    <citation type="journal article" date="1989" name="EMBO J.">
        <title>Molecular characterization of a gene of the 'EGF family' expressed in undifferentiated human NTERA2 teratocarcinoma cells.</title>
        <authorList>
            <person name="Ciccodicola A."/>
            <person name="Dono R."/>
            <person name="Obici S."/>
            <person name="Zollo M."/>
            <person name="Persico M.G."/>
        </authorList>
    </citation>
    <scope>NUCLEOTIDE SEQUENCE [MRNA]</scope>
</reference>
<reference key="2">
    <citation type="journal article" date="1991" name="Am. J. Hum. Genet.">
        <title>Isolation and characterization of the CRIPTO autosomal gene and its X-linked related sequence.</title>
        <authorList>
            <person name="Dono R."/>
            <person name="Montuori N."/>
            <person name="Rocchi M."/>
            <person name="de Ponti-Zilli L."/>
            <person name="Ciccodicola A."/>
            <person name="Persico M.G."/>
        </authorList>
    </citation>
    <scope>NUCLEOTIDE SEQUENCE [GENOMIC DNA]</scope>
</reference>
<reference key="3">
    <citation type="journal article" date="2006" name="Nature">
        <title>The DNA sequence, annotation and analysis of human chromosome 3.</title>
        <authorList>
            <person name="Muzny D.M."/>
            <person name="Scherer S.E."/>
            <person name="Kaul R."/>
            <person name="Wang J."/>
            <person name="Yu J."/>
            <person name="Sudbrak R."/>
            <person name="Buhay C.J."/>
            <person name="Chen R."/>
            <person name="Cree A."/>
            <person name="Ding Y."/>
            <person name="Dugan-Rocha S."/>
            <person name="Gill R."/>
            <person name="Gunaratne P."/>
            <person name="Harris R.A."/>
            <person name="Hawes A.C."/>
            <person name="Hernandez J."/>
            <person name="Hodgson A.V."/>
            <person name="Hume J."/>
            <person name="Jackson A."/>
            <person name="Khan Z.M."/>
            <person name="Kovar-Smith C."/>
            <person name="Lewis L.R."/>
            <person name="Lozado R.J."/>
            <person name="Metzker M.L."/>
            <person name="Milosavljevic A."/>
            <person name="Miner G.R."/>
            <person name="Morgan M.B."/>
            <person name="Nazareth L.V."/>
            <person name="Scott G."/>
            <person name="Sodergren E."/>
            <person name="Song X.-Z."/>
            <person name="Steffen D."/>
            <person name="Wei S."/>
            <person name="Wheeler D.A."/>
            <person name="Wright M.W."/>
            <person name="Worley K.C."/>
            <person name="Yuan Y."/>
            <person name="Zhang Z."/>
            <person name="Adams C.Q."/>
            <person name="Ansari-Lari M.A."/>
            <person name="Ayele M."/>
            <person name="Brown M.J."/>
            <person name="Chen G."/>
            <person name="Chen Z."/>
            <person name="Clendenning J."/>
            <person name="Clerc-Blankenburg K.P."/>
            <person name="Chen R."/>
            <person name="Chen Z."/>
            <person name="Davis C."/>
            <person name="Delgado O."/>
            <person name="Dinh H.H."/>
            <person name="Dong W."/>
            <person name="Draper H."/>
            <person name="Ernst S."/>
            <person name="Fu G."/>
            <person name="Gonzalez-Garay M.L."/>
            <person name="Garcia D.K."/>
            <person name="Gillett W."/>
            <person name="Gu J."/>
            <person name="Hao B."/>
            <person name="Haugen E."/>
            <person name="Havlak P."/>
            <person name="He X."/>
            <person name="Hennig S."/>
            <person name="Hu S."/>
            <person name="Huang W."/>
            <person name="Jackson L.R."/>
            <person name="Jacob L.S."/>
            <person name="Kelly S.H."/>
            <person name="Kube M."/>
            <person name="Levy R."/>
            <person name="Li Z."/>
            <person name="Liu B."/>
            <person name="Liu J."/>
            <person name="Liu W."/>
            <person name="Lu J."/>
            <person name="Maheshwari M."/>
            <person name="Nguyen B.-V."/>
            <person name="Okwuonu G.O."/>
            <person name="Palmeiri A."/>
            <person name="Pasternak S."/>
            <person name="Perez L.M."/>
            <person name="Phelps K.A."/>
            <person name="Plopper F.J."/>
            <person name="Qiang B."/>
            <person name="Raymond C."/>
            <person name="Rodriguez R."/>
            <person name="Saenphimmachak C."/>
            <person name="Santibanez J."/>
            <person name="Shen H."/>
            <person name="Shen Y."/>
            <person name="Subramanian S."/>
            <person name="Tabor P.E."/>
            <person name="Verduzco D."/>
            <person name="Waldron L."/>
            <person name="Wang J."/>
            <person name="Wang J."/>
            <person name="Wang Q."/>
            <person name="Williams G.A."/>
            <person name="Wong G.K.-S."/>
            <person name="Yao Z."/>
            <person name="Zhang J."/>
            <person name="Zhang X."/>
            <person name="Zhao G."/>
            <person name="Zhou J."/>
            <person name="Zhou Y."/>
            <person name="Nelson D."/>
            <person name="Lehrach H."/>
            <person name="Reinhardt R."/>
            <person name="Naylor S.L."/>
            <person name="Yang H."/>
            <person name="Olson M."/>
            <person name="Weinstock G."/>
            <person name="Gibbs R.A."/>
        </authorList>
    </citation>
    <scope>NUCLEOTIDE SEQUENCE [LARGE SCALE GENOMIC DNA]</scope>
</reference>
<reference key="4">
    <citation type="submission" date="2005-07" db="EMBL/GenBank/DDBJ databases">
        <authorList>
            <person name="Mural R.J."/>
            <person name="Istrail S."/>
            <person name="Sutton G."/>
            <person name="Florea L."/>
            <person name="Halpern A.L."/>
            <person name="Mobarry C.M."/>
            <person name="Lippert R."/>
            <person name="Walenz B."/>
            <person name="Shatkay H."/>
            <person name="Dew I."/>
            <person name="Miller J.R."/>
            <person name="Flanigan M.J."/>
            <person name="Edwards N.J."/>
            <person name="Bolanos R."/>
            <person name="Fasulo D."/>
            <person name="Halldorsson B.V."/>
            <person name="Hannenhalli S."/>
            <person name="Turner R."/>
            <person name="Yooseph S."/>
            <person name="Lu F."/>
            <person name="Nusskern D.R."/>
            <person name="Shue B.C."/>
            <person name="Zheng X.H."/>
            <person name="Zhong F."/>
            <person name="Delcher A.L."/>
            <person name="Huson D.H."/>
            <person name="Kravitz S.A."/>
            <person name="Mouchard L."/>
            <person name="Reinert K."/>
            <person name="Remington K.A."/>
            <person name="Clark A.G."/>
            <person name="Waterman M.S."/>
            <person name="Eichler E.E."/>
            <person name="Adams M.D."/>
            <person name="Hunkapiller M.W."/>
            <person name="Myers E.W."/>
            <person name="Venter J.C."/>
        </authorList>
    </citation>
    <scope>NUCLEOTIDE SEQUENCE [LARGE SCALE GENOMIC DNA]</scope>
    <scope>VARIANT ALA-22</scope>
</reference>
<reference key="5">
    <citation type="journal article" date="2004" name="Genome Res.">
        <title>The status, quality, and expansion of the NIH full-length cDNA project: the Mammalian Gene Collection (MGC).</title>
        <authorList>
            <consortium name="The MGC Project Team"/>
        </authorList>
    </citation>
    <scope>NUCLEOTIDE SEQUENCE [LARGE SCALE MRNA]</scope>
    <scope>VARIANT ALA-22</scope>
    <source>
        <tissue>Brain</tissue>
        <tissue>Kidney</tissue>
    </source>
</reference>
<reference key="6">
    <citation type="journal article" date="2004" name="Protein Sci.">
        <title>Signal peptide prediction based on analysis of experimentally verified cleavage sites.</title>
        <authorList>
            <person name="Zhang Z."/>
            <person name="Henzel W.J."/>
        </authorList>
    </citation>
    <scope>PROTEIN SEQUENCE OF 31-45</scope>
</reference>
<reference key="7">
    <citation type="journal article" date="2002" name="Mol. Cell. Biol.">
        <title>Cripto-1 activates nodal- and ALK4-dependent and -independent signaling pathways in mammary epithelial Cells.</title>
        <authorList>
            <person name="Bianco C."/>
            <person name="Adkins H.B."/>
            <person name="Wechselberger C."/>
            <person name="Seno M."/>
            <person name="Normanno N."/>
            <person name="De Luca A."/>
            <person name="Sun Y."/>
            <person name="Khan N."/>
            <person name="Kenney N."/>
            <person name="Ebert A."/>
            <person name="Williams K.P."/>
            <person name="Sanicola M."/>
            <person name="Salomon D.S."/>
        </authorList>
    </citation>
    <scope>INTERACTION WITH ACVR1B</scope>
    <scope>FUNCTION</scope>
</reference>
<reference key="8">
    <citation type="journal article" date="2003" name="Eur. J. Biochem.">
        <title>The CRIPTO/FRL-1/CRYPTIC (CFC) domain of human Cripto.</title>
        <authorList>
            <person name="Foley S.F."/>
            <person name="Van Vlijmen H.W."/>
            <person name="Boynton R.E."/>
            <person name="Adkins H.B."/>
            <person name="Cheung A.E."/>
            <person name="Singh J."/>
            <person name="Sanicola M."/>
            <person name="Young C.N."/>
            <person name="Wen D."/>
        </authorList>
    </citation>
    <scope>DISULFIDE BONDS</scope>
</reference>
<reference key="9">
    <citation type="journal article" date="2008" name="Biochim. Biophys. Acta">
        <title>Characterization of the glycosylphosphatidylinositol-anchor signal sequence of human Cryptic with a hydrophilic extension.</title>
        <authorList>
            <person name="Watanabe K."/>
            <person name="Nagaoka T."/>
            <person name="Strizzi L."/>
            <person name="Mancino M."/>
            <person name="Gonzales M."/>
            <person name="Bianco C."/>
            <person name="Salomon D.S."/>
        </authorList>
    </citation>
    <scope>SUBCELLULAR LOCATION</scope>
    <scope>GPI-ANCHOR AT ASP-150</scope>
    <scope>MUTAGENESIS OF TYR-188</scope>
</reference>
<reference key="10">
    <citation type="journal article" date="2008" name="Biochem. Biophys. Res. Commun.">
        <title>CRIPTO3, a presumed pseudogene, is expressed in cancer.</title>
        <authorList>
            <person name="Sun C."/>
            <person name="Orozco O."/>
            <person name="Olson D.L."/>
            <person name="Choi E."/>
            <person name="Garber E."/>
            <person name="Tizard R."/>
            <person name="Szak S."/>
            <person name="Sanicola M."/>
            <person name="Carulli J.P."/>
        </authorList>
    </citation>
    <scope>TISSUE SPECIFICITY</scope>
</reference>
<reference key="11">
    <citation type="journal article" date="2016" name="J. Cell Biol.">
        <title>A GPI processing phospholipase A2, PGAP6, modulates Nodal signaling in embryos by shedding CRIPTO.</title>
        <authorList>
            <person name="Lee G.H."/>
            <person name="Fujita M."/>
            <person name="Takaoka K."/>
            <person name="Murakami Y."/>
            <person name="Fujihara Y."/>
            <person name="Kanzawa N."/>
            <person name="Murakami K.I."/>
            <person name="Kajikawa E."/>
            <person name="Takada Y."/>
            <person name="Saito K."/>
            <person name="Ikawa M."/>
            <person name="Hamada H."/>
            <person name="Maeda Y."/>
            <person name="Kinoshita T."/>
        </authorList>
    </citation>
    <scope>FUNCTION</scope>
    <scope>SUBCELLULAR LOCATION</scope>
</reference>
<gene>
    <name evidence="11 13" type="primary">CRIPTO</name>
    <name type="synonym">CRIPTO-1</name>
    <name type="synonym">TDGF1</name>
</gene>
<dbReference type="EMBL" id="X14253">
    <property type="protein sequence ID" value="CAA32467.1"/>
    <property type="molecule type" value="mRNA"/>
</dbReference>
<dbReference type="EMBL" id="M96955">
    <property type="protein sequence ID" value="AAA61134.1"/>
    <property type="molecule type" value="Genomic_DNA"/>
</dbReference>
<dbReference type="EMBL" id="AC104304">
    <property type="status" value="NOT_ANNOTATED_CDS"/>
    <property type="molecule type" value="Genomic_DNA"/>
</dbReference>
<dbReference type="EMBL" id="CH471055">
    <property type="protein sequence ID" value="EAW64773.1"/>
    <property type="molecule type" value="Genomic_DNA"/>
</dbReference>
<dbReference type="EMBL" id="BC022393">
    <property type="protein sequence ID" value="AAH22393.1"/>
    <property type="molecule type" value="mRNA"/>
</dbReference>
<dbReference type="EMBL" id="BC067844">
    <property type="protein sequence ID" value="AAH67844.1"/>
    <property type="molecule type" value="mRNA"/>
</dbReference>
<dbReference type="CCDS" id="CCDS2742.1"/>
<dbReference type="PIR" id="B39787">
    <property type="entry name" value="A30362"/>
</dbReference>
<dbReference type="RefSeq" id="NP_001167607.1">
    <property type="nucleotide sequence ID" value="NM_001174136.1"/>
</dbReference>
<dbReference type="RefSeq" id="NP_003203.1">
    <property type="nucleotide sequence ID" value="NM_003212.4"/>
</dbReference>
<dbReference type="SMR" id="P13385"/>
<dbReference type="BioGRID" id="112856">
    <property type="interactions" value="72"/>
</dbReference>
<dbReference type="FunCoup" id="P13385">
    <property type="interactions" value="61"/>
</dbReference>
<dbReference type="IntAct" id="P13385">
    <property type="interactions" value="53"/>
</dbReference>
<dbReference type="MINT" id="P13385"/>
<dbReference type="STRING" id="9606.ENSP00000296145"/>
<dbReference type="ChEMBL" id="CHEMBL3713025"/>
<dbReference type="GlyCosmos" id="P13385">
    <property type="glycosylation" value="1 site, No reported glycans"/>
</dbReference>
<dbReference type="GlyGen" id="P13385">
    <property type="glycosylation" value="2 sites"/>
</dbReference>
<dbReference type="BioMuta" id="TDGF1"/>
<dbReference type="DMDM" id="117473"/>
<dbReference type="jPOST" id="P13385"/>
<dbReference type="MassIVE" id="P13385"/>
<dbReference type="PaxDb" id="9606-ENSP00000296145"/>
<dbReference type="PeptideAtlas" id="P13385"/>
<dbReference type="ProteomicsDB" id="52909"/>
<dbReference type="Antibodypedia" id="35134">
    <property type="antibodies" value="646 antibodies from 38 providers"/>
</dbReference>
<dbReference type="DNASU" id="6997"/>
<dbReference type="Ensembl" id="ENST00000296145.6">
    <property type="protein sequence ID" value="ENSP00000296145.5"/>
    <property type="gene ID" value="ENSG00000241186.10"/>
</dbReference>
<dbReference type="GeneID" id="6997"/>
<dbReference type="KEGG" id="hsa:6997"/>
<dbReference type="MANE-Select" id="ENST00000296145.6">
    <property type="protein sequence ID" value="ENSP00000296145.5"/>
    <property type="RefSeq nucleotide sequence ID" value="NM_003212.4"/>
    <property type="RefSeq protein sequence ID" value="NP_003203.1"/>
</dbReference>
<dbReference type="UCSC" id="uc003cpv.4">
    <property type="organism name" value="human"/>
</dbReference>
<dbReference type="AGR" id="HGNC:11701"/>
<dbReference type="CTD" id="6997"/>
<dbReference type="DisGeNET" id="6997"/>
<dbReference type="GeneCards" id="CRIPTO"/>
<dbReference type="GeneReviews" id="CRIPTO"/>
<dbReference type="HGNC" id="HGNC:11701">
    <property type="gene designation" value="CRIPTO"/>
</dbReference>
<dbReference type="HPA" id="ENSG00000241186">
    <property type="expression patterns" value="Tissue enhanced (kidney, lymphoid tissue, ovary)"/>
</dbReference>
<dbReference type="MalaCards" id="CRIPTO"/>
<dbReference type="MIM" id="187395">
    <property type="type" value="gene"/>
</dbReference>
<dbReference type="neXtProt" id="NX_P13385"/>
<dbReference type="OpenTargets" id="ENSG00000241186"/>
<dbReference type="Orphanet" id="93925">
    <property type="disease" value="Alobar holoprosencephaly"/>
</dbReference>
<dbReference type="Orphanet" id="93924">
    <property type="disease" value="Lobar holoprosencephaly"/>
</dbReference>
<dbReference type="Orphanet" id="280200">
    <property type="disease" value="Microform holoprosencephaly"/>
</dbReference>
<dbReference type="Orphanet" id="93926">
    <property type="disease" value="Midline interhemispheric variant of holoprosencephaly"/>
</dbReference>
<dbReference type="Orphanet" id="220386">
    <property type="disease" value="Semilobar holoprosencephaly"/>
</dbReference>
<dbReference type="Orphanet" id="280195">
    <property type="disease" value="Septopreoptic holoprosencephaly"/>
</dbReference>
<dbReference type="PharmGKB" id="PA36420"/>
<dbReference type="VEuPathDB" id="HostDB:ENSG00000241186"/>
<dbReference type="eggNOG" id="KOG1217">
    <property type="taxonomic scope" value="Eukaryota"/>
</dbReference>
<dbReference type="GeneTree" id="ENSGT00940000159076"/>
<dbReference type="InParanoid" id="P13385"/>
<dbReference type="OMA" id="MCKCWRG"/>
<dbReference type="OrthoDB" id="9893603at2759"/>
<dbReference type="PAN-GO" id="P13385">
    <property type="GO annotations" value="9 GO annotations based on evolutionary models"/>
</dbReference>
<dbReference type="PhylomeDB" id="P13385"/>
<dbReference type="TreeFam" id="TF333187"/>
<dbReference type="PathwayCommons" id="P13385"/>
<dbReference type="Reactome" id="R-HSA-1181150">
    <property type="pathway name" value="Signaling by NODAL"/>
</dbReference>
<dbReference type="Reactome" id="R-HSA-1433617">
    <property type="pathway name" value="Regulation of signaling by NODAL"/>
</dbReference>
<dbReference type="Reactome" id="R-HSA-2892247">
    <property type="pathway name" value="POU5F1 (OCT4), SOX2, NANOG activate genes related to proliferation"/>
</dbReference>
<dbReference type="SignaLink" id="P13385"/>
<dbReference type="SIGNOR" id="P13385"/>
<dbReference type="BioGRID-ORCS" id="6997">
    <property type="hits" value="407 hits in 1117 CRISPR screens"/>
</dbReference>
<dbReference type="ChiTaRS" id="TDGF1">
    <property type="organism name" value="human"/>
</dbReference>
<dbReference type="GeneWiki" id="Teratocarcinoma-derived_growth_factor_1"/>
<dbReference type="GenomeRNAi" id="6997"/>
<dbReference type="Pharos" id="P13385">
    <property type="development level" value="Tbio"/>
</dbReference>
<dbReference type="PRO" id="PR:P13385"/>
<dbReference type="Proteomes" id="UP000005640">
    <property type="component" value="Chromosome 3"/>
</dbReference>
<dbReference type="RNAct" id="P13385">
    <property type="molecule type" value="protein"/>
</dbReference>
<dbReference type="Bgee" id="ENSG00000241186">
    <property type="expression patterns" value="Expressed in adrenal tissue and 90 other cell types or tissues"/>
</dbReference>
<dbReference type="ExpressionAtlas" id="P13385">
    <property type="expression patterns" value="baseline and differential"/>
</dbReference>
<dbReference type="GO" id="GO:0016324">
    <property type="term" value="C:apical plasma membrane"/>
    <property type="evidence" value="ECO:0000314"/>
    <property type="project" value="UniProtKB"/>
</dbReference>
<dbReference type="GO" id="GO:0009986">
    <property type="term" value="C:cell surface"/>
    <property type="evidence" value="ECO:0000314"/>
    <property type="project" value="UniProtKB"/>
</dbReference>
<dbReference type="GO" id="GO:0005576">
    <property type="term" value="C:extracellular region"/>
    <property type="evidence" value="ECO:0000318"/>
    <property type="project" value="GO_Central"/>
</dbReference>
<dbReference type="GO" id="GO:0005615">
    <property type="term" value="C:extracellular space"/>
    <property type="evidence" value="ECO:0000314"/>
    <property type="project" value="UniProtKB"/>
</dbReference>
<dbReference type="GO" id="GO:0045121">
    <property type="term" value="C:membrane raft"/>
    <property type="evidence" value="ECO:0000314"/>
    <property type="project" value="UniProtKB"/>
</dbReference>
<dbReference type="GO" id="GO:0005886">
    <property type="term" value="C:plasma membrane"/>
    <property type="evidence" value="ECO:0000304"/>
    <property type="project" value="Reactome"/>
</dbReference>
<dbReference type="GO" id="GO:0098552">
    <property type="term" value="C:side of membrane"/>
    <property type="evidence" value="ECO:0007669"/>
    <property type="project" value="UniProtKB-KW"/>
</dbReference>
<dbReference type="GO" id="GO:0070697">
    <property type="term" value="F:activin receptor binding"/>
    <property type="evidence" value="ECO:0000318"/>
    <property type="project" value="GO_Central"/>
</dbReference>
<dbReference type="GO" id="GO:0008083">
    <property type="term" value="F:growth factor activity"/>
    <property type="evidence" value="ECO:0000314"/>
    <property type="project" value="UniProtKB"/>
</dbReference>
<dbReference type="GO" id="GO:0038100">
    <property type="term" value="F:nodal binding"/>
    <property type="evidence" value="ECO:0000318"/>
    <property type="project" value="GO_Central"/>
</dbReference>
<dbReference type="GO" id="GO:0005102">
    <property type="term" value="F:signaling receptor binding"/>
    <property type="evidence" value="ECO:0000314"/>
    <property type="project" value="UniProtKB"/>
</dbReference>
<dbReference type="GO" id="GO:0008595">
    <property type="term" value="P:anterior/posterior axis specification, embryo"/>
    <property type="evidence" value="ECO:0000250"/>
    <property type="project" value="UniProtKB"/>
</dbReference>
<dbReference type="GO" id="GO:0009952">
    <property type="term" value="P:anterior/posterior pattern specification"/>
    <property type="evidence" value="ECO:0000318"/>
    <property type="project" value="GO_Central"/>
</dbReference>
<dbReference type="GO" id="GO:0001568">
    <property type="term" value="P:blood vessel development"/>
    <property type="evidence" value="ECO:0000318"/>
    <property type="project" value="GO_Central"/>
</dbReference>
<dbReference type="GO" id="GO:0030154">
    <property type="term" value="P:cell differentiation"/>
    <property type="evidence" value="ECO:0000304"/>
    <property type="project" value="UniProtKB"/>
</dbReference>
<dbReference type="GO" id="GO:0002042">
    <property type="term" value="P:cell migration involved in sprouting angiogenesis"/>
    <property type="evidence" value="ECO:0000315"/>
    <property type="project" value="UniProtKB"/>
</dbReference>
<dbReference type="GO" id="GO:0071364">
    <property type="term" value="P:cellular response to epidermal growth factor stimulus"/>
    <property type="evidence" value="ECO:0000314"/>
    <property type="project" value="UniProtKB"/>
</dbReference>
<dbReference type="GO" id="GO:0044344">
    <property type="term" value="P:cellular response to fibroblast growth factor stimulus"/>
    <property type="evidence" value="ECO:0000314"/>
    <property type="project" value="UniProtKB"/>
</dbReference>
<dbReference type="GO" id="GO:0035729">
    <property type="term" value="P:cellular response to hepatocyte growth factor stimulus"/>
    <property type="evidence" value="ECO:0000314"/>
    <property type="project" value="UniProtKB"/>
</dbReference>
<dbReference type="GO" id="GO:0071354">
    <property type="term" value="P:cellular response to interleukin-6"/>
    <property type="evidence" value="ECO:0000314"/>
    <property type="project" value="UniProtKB"/>
</dbReference>
<dbReference type="GO" id="GO:0071356">
    <property type="term" value="P:cellular response to tumor necrosis factor"/>
    <property type="evidence" value="ECO:0000314"/>
    <property type="project" value="UniProtKB"/>
</dbReference>
<dbReference type="GO" id="GO:0071346">
    <property type="term" value="P:cellular response to type II interferon"/>
    <property type="evidence" value="ECO:0000314"/>
    <property type="project" value="UniProtKB"/>
</dbReference>
<dbReference type="GO" id="GO:0007368">
    <property type="term" value="P:determination of left/right symmetry"/>
    <property type="evidence" value="ECO:0000318"/>
    <property type="project" value="GO_Central"/>
</dbReference>
<dbReference type="GO" id="GO:0009792">
    <property type="term" value="P:embryo development ending in birth or egg hatching"/>
    <property type="evidence" value="ECO:0000304"/>
    <property type="project" value="UniProtKB"/>
</dbReference>
<dbReference type="GO" id="GO:0007507">
    <property type="term" value="P:heart development"/>
    <property type="evidence" value="ECO:0000314"/>
    <property type="project" value="UniProtKB"/>
</dbReference>
<dbReference type="GO" id="GO:0030879">
    <property type="term" value="P:mammary gland development"/>
    <property type="evidence" value="ECO:0000304"/>
    <property type="project" value="UniProtKB"/>
</dbReference>
<dbReference type="GO" id="GO:0001763">
    <property type="term" value="P:morphogenesis of a branching structure"/>
    <property type="evidence" value="ECO:0000304"/>
    <property type="project" value="UniProtKB"/>
</dbReference>
<dbReference type="GO" id="GO:0043066">
    <property type="term" value="P:negative regulation of apoptotic process"/>
    <property type="evidence" value="ECO:0000314"/>
    <property type="project" value="UniProtKB"/>
</dbReference>
<dbReference type="GO" id="GO:0038092">
    <property type="term" value="P:nodal signaling pathway"/>
    <property type="evidence" value="ECO:0000318"/>
    <property type="project" value="GO_Central"/>
</dbReference>
<dbReference type="GO" id="GO:0030335">
    <property type="term" value="P:positive regulation of cell migration"/>
    <property type="evidence" value="ECO:0000314"/>
    <property type="project" value="UniProtKB"/>
</dbReference>
<dbReference type="GO" id="GO:0008284">
    <property type="term" value="P:positive regulation of cell population proliferation"/>
    <property type="evidence" value="ECO:0000314"/>
    <property type="project" value="MGI"/>
</dbReference>
<dbReference type="GO" id="GO:0010595">
    <property type="term" value="P:positive regulation of endothelial cell migration"/>
    <property type="evidence" value="ECO:0000314"/>
    <property type="project" value="UniProtKB"/>
</dbReference>
<dbReference type="GO" id="GO:0043406">
    <property type="term" value="P:positive regulation of MAP kinase activity"/>
    <property type="evidence" value="ECO:0000314"/>
    <property type="project" value="MGI"/>
</dbReference>
<dbReference type="GO" id="GO:0043410">
    <property type="term" value="P:positive regulation of MAPK cascade"/>
    <property type="evidence" value="ECO:0000314"/>
    <property type="project" value="UniProtKB"/>
</dbReference>
<dbReference type="GO" id="GO:0009966">
    <property type="term" value="P:regulation of signal transduction"/>
    <property type="evidence" value="ECO:0000314"/>
    <property type="project" value="UniProtKB"/>
</dbReference>
<dbReference type="CDD" id="cd00054">
    <property type="entry name" value="EGF_CA"/>
    <property type="match status" value="1"/>
</dbReference>
<dbReference type="FunFam" id="2.10.25.10:FF:000421">
    <property type="entry name" value="Teratocarcinoma-derived growth factor"/>
    <property type="match status" value="1"/>
</dbReference>
<dbReference type="Gene3D" id="2.10.25.10">
    <property type="entry name" value="Laminin"/>
    <property type="match status" value="1"/>
</dbReference>
<dbReference type="InterPro" id="IPR017047">
    <property type="entry name" value="Cripto_growth_factor"/>
</dbReference>
<dbReference type="InterPro" id="IPR019011">
    <property type="entry name" value="Cryptic/Cripto_CFC-dom"/>
</dbReference>
<dbReference type="InterPro" id="IPR000742">
    <property type="entry name" value="EGF-like_dom"/>
</dbReference>
<dbReference type="Pfam" id="PF09443">
    <property type="entry name" value="CFC"/>
    <property type="match status" value="1"/>
</dbReference>
<dbReference type="PIRSF" id="PIRSF036301">
    <property type="entry name" value="Cripto_growth_factor"/>
    <property type="match status" value="1"/>
</dbReference>
<dbReference type="SUPFAM" id="SSF57196">
    <property type="entry name" value="EGF/Laminin"/>
    <property type="match status" value="2"/>
</dbReference>
<dbReference type="PROSITE" id="PS00022">
    <property type="entry name" value="EGF_1"/>
    <property type="match status" value="1"/>
</dbReference>
<dbReference type="PROSITE" id="PS50026">
    <property type="entry name" value="EGF_3"/>
    <property type="match status" value="1"/>
</dbReference>
<evidence type="ECO:0000255" key="1"/>
<evidence type="ECO:0000255" key="2">
    <source>
        <dbReference type="PROSITE-ProRule" id="PRU00076"/>
    </source>
</evidence>
<evidence type="ECO:0000269" key="3">
    <source>
    </source>
</evidence>
<evidence type="ECO:0000269" key="4">
    <source>
    </source>
</evidence>
<evidence type="ECO:0000269" key="5">
    <source>
    </source>
</evidence>
<evidence type="ECO:0000269" key="6">
    <source>
    </source>
</evidence>
<evidence type="ECO:0000269" key="7">
    <source>
    </source>
</evidence>
<evidence type="ECO:0000269" key="8">
    <source>
    </source>
</evidence>
<evidence type="ECO:0000269" key="9">
    <source>
    </source>
</evidence>
<evidence type="ECO:0000269" key="10">
    <source ref="4"/>
</evidence>
<evidence type="ECO:0000303" key="11">
    <source>
    </source>
</evidence>
<evidence type="ECO:0000305" key="12"/>
<evidence type="ECO:0000312" key="13">
    <source>
        <dbReference type="HGNC" id="HGNC:11701"/>
    </source>
</evidence>
<sequence>MDCRKMARFSYSVIWIMAISKVFELGLVAGLGHQEFARPSRGYLAFRDDSIWPQEEPAIRPRSSQRVPPMGIQHSKELNRTCCLNGGTCMLGSFCACPPSFYGRNCEHDVRKENCGSVPHDTWLPKKCSLCKCWHGQLRCFPQAFLPGCDGLVMDEHLVASRTPELPPSARTTTFMLVGICLSIQSYY</sequence>
<accession>P13385</accession>
<accession>Q8TCC1</accession>
<name>TDGF1_HUMAN</name>
<keyword id="KW-1003">Cell membrane</keyword>
<keyword id="KW-0903">Direct protein sequencing</keyword>
<keyword id="KW-1015">Disulfide bond</keyword>
<keyword id="KW-0245">EGF-like domain</keyword>
<keyword id="KW-0325">Glycoprotein</keyword>
<keyword id="KW-0336">GPI-anchor</keyword>
<keyword id="KW-0339">Growth factor</keyword>
<keyword id="KW-0449">Lipoprotein</keyword>
<keyword id="KW-0472">Membrane</keyword>
<keyword id="KW-1185">Reference proteome</keyword>
<keyword id="KW-0964">Secreted</keyword>
<keyword id="KW-0732">Signal</keyword>
<proteinExistence type="evidence at protein level"/>
<comment type="function">
    <text evidence="3 9">GPI-anchored cell membrane protein involved in Nodal signaling. Cell-associated CRIPTO acts as a Nodal coreceptor in cis. Shedding of CRIPTO by TMEM8A modulates Nodal signaling by allowing soluble CRIPTO to act as a Nodal coreceptor on other cells (PubMed:27881714). Could play a role in the determination of the epiblastic cells that subsequently give rise to the mesoderm (PubMed:11909953).</text>
</comment>
<comment type="subunit">
    <text evidence="3">Interacts with the activin type-1 receptor ACVR1B.</text>
</comment>
<comment type="subcellular location">
    <subcellularLocation>
        <location evidence="8 9">Cell membrane</location>
        <topology evidence="8 9">Lipid-anchor</topology>
        <topology evidence="8 9">GPI-anchor</topology>
    </subcellularLocation>
    <subcellularLocation>
        <location evidence="9">Secreted</location>
    </subcellularLocation>
    <text evidence="9">Released from the cell membrane by GPI cleavage.</text>
</comment>
<comment type="tissue specificity">
    <text evidence="7">Preferentially expressed in gastric and colorectal carcinomas than in their normal counterparts. Expressed in breast and lung.</text>
</comment>
<comment type="PTM">
    <text evidence="9">The GPI-anchor is attached to the protein in the endoplasmic reticulum and serves to target the protein to the cell surface. There, it is processed by GPI processing phospholipase A2 (TMEM8A), removing an acyl-chain at the sn-2 position of GPI and releasing CRIPTO as a lysophosphatidylinositol-bearing form, which is further cleaved by phospholipase D (GPLD1) into a soluble form.</text>
</comment>
<comment type="similarity">
    <text evidence="12">Belongs to the EGF-CFC (Cripto-1/FRL1/Cryptic) family.</text>
</comment>
<protein>
    <recommendedName>
        <fullName evidence="12">Protein Cripto</fullName>
    </recommendedName>
    <alternativeName>
        <fullName evidence="13">Cripto, EGF-CFC family member</fullName>
    </alternativeName>
    <alternativeName>
        <fullName>Cripto-1 growth factor</fullName>
        <shortName>CRGF</shortName>
    </alternativeName>
    <alternativeName>
        <fullName>Epidermal growth factor-like cripto protein CR1</fullName>
    </alternativeName>
    <alternativeName>
        <fullName>Teratocarcinoma-derived growth factor 1</fullName>
    </alternativeName>
</protein>
<feature type="signal peptide" evidence="5">
    <location>
        <begin position="1"/>
        <end position="30"/>
    </location>
</feature>
<feature type="chain" id="PRO_0000007503" description="Protein Cripto">
    <location>
        <begin position="31"/>
        <end position="150"/>
    </location>
</feature>
<feature type="propeptide" id="PRO_0000395410" description="Removed in mature form">
    <location>
        <begin position="151"/>
        <end position="188"/>
    </location>
</feature>
<feature type="domain" description="EGF-like" evidence="2">
    <location>
        <begin position="78"/>
        <end position="107"/>
    </location>
</feature>
<feature type="lipid moiety-binding region" description="GPI-anchor amidated aspartate" evidence="8">
    <location>
        <position position="150"/>
    </location>
</feature>
<feature type="glycosylation site" description="N-linked (GlcNAc...) asparagine" evidence="1">
    <location>
        <position position="79"/>
    </location>
</feature>
<feature type="disulfide bond" evidence="2">
    <location>
        <begin position="82"/>
        <end position="89"/>
    </location>
</feature>
<feature type="disulfide bond" evidence="2">
    <location>
        <begin position="83"/>
        <end position="95"/>
    </location>
</feature>
<feature type="disulfide bond" evidence="2">
    <location>
        <begin position="97"/>
        <end position="106"/>
    </location>
</feature>
<feature type="disulfide bond" evidence="2 4">
    <location>
        <begin position="115"/>
        <end position="133"/>
    </location>
</feature>
<feature type="disulfide bond" evidence="2 4">
    <location>
        <begin position="128"/>
        <end position="149"/>
    </location>
</feature>
<feature type="disulfide bond" evidence="2 4">
    <location>
        <begin position="131"/>
        <end position="140"/>
    </location>
</feature>
<feature type="sequence variant" id="VAR_024262" description="In dbSNP:rs11130097." evidence="6 10">
    <original>V</original>
    <variation>A</variation>
    <location>
        <position position="22"/>
    </location>
</feature>
<feature type="sequence variant" id="VAR_021903" description="In dbSNP:rs2293025.">
    <original>Y</original>
    <variation>D</variation>
    <location>
        <position position="43"/>
    </location>
</feature>
<feature type="sequence variant" id="VAR_048975" description="In dbSNP:rs34501971.">
    <original>R</original>
    <variation>G</variation>
    <location>
        <position position="111"/>
    </location>
</feature>
<feature type="mutagenesis site" description="Alters the localization and decreases the biological activity." evidence="8">
    <original>Y</original>
    <variation>YVVVVV</variation>
    <location>
        <position position="188"/>
    </location>
</feature>
<organism>
    <name type="scientific">Homo sapiens</name>
    <name type="common">Human</name>
    <dbReference type="NCBI Taxonomy" id="9606"/>
    <lineage>
        <taxon>Eukaryota</taxon>
        <taxon>Metazoa</taxon>
        <taxon>Chordata</taxon>
        <taxon>Craniata</taxon>
        <taxon>Vertebrata</taxon>
        <taxon>Euteleostomi</taxon>
        <taxon>Mammalia</taxon>
        <taxon>Eutheria</taxon>
        <taxon>Euarchontoglires</taxon>
        <taxon>Primates</taxon>
        <taxon>Haplorrhini</taxon>
        <taxon>Catarrhini</taxon>
        <taxon>Hominidae</taxon>
        <taxon>Homo</taxon>
    </lineage>
</organism>